<comment type="function">
    <text evidence="1">Catalyzes the N-acylation of UDP-3-O-acylglucosamine using 3-hydroxyacyl-ACP as the acyl donor. Is involved in the biosynthesis of lipid A, a phosphorylated glycolipid that anchors the lipopolysaccharide to the outer membrane of the cell.</text>
</comment>
<comment type="catalytic activity">
    <reaction evidence="1">
        <text>a UDP-3-O-[(3R)-3-hydroxyacyl]-alpha-D-glucosamine + a (3R)-hydroxyacyl-[ACP] = a UDP-2-N,3-O-bis[(3R)-3-hydroxyacyl]-alpha-D-glucosamine + holo-[ACP] + H(+)</text>
        <dbReference type="Rhea" id="RHEA:53836"/>
        <dbReference type="Rhea" id="RHEA-COMP:9685"/>
        <dbReference type="Rhea" id="RHEA-COMP:9945"/>
        <dbReference type="ChEBI" id="CHEBI:15378"/>
        <dbReference type="ChEBI" id="CHEBI:64479"/>
        <dbReference type="ChEBI" id="CHEBI:78827"/>
        <dbReference type="ChEBI" id="CHEBI:137740"/>
        <dbReference type="ChEBI" id="CHEBI:137748"/>
        <dbReference type="EC" id="2.3.1.191"/>
    </reaction>
</comment>
<comment type="pathway">
    <text evidence="1">Bacterial outer membrane biogenesis; LPS lipid A biosynthesis.</text>
</comment>
<comment type="subunit">
    <text evidence="1">Homotrimer.</text>
</comment>
<comment type="similarity">
    <text evidence="1">Belongs to the transferase hexapeptide repeat family. LpxD subfamily.</text>
</comment>
<protein>
    <recommendedName>
        <fullName evidence="1">UDP-3-O-acylglucosamine N-acyltransferase</fullName>
        <ecNumber evidence="1">2.3.1.191</ecNumber>
    </recommendedName>
</protein>
<keyword id="KW-0012">Acyltransferase</keyword>
<keyword id="KW-0441">Lipid A biosynthesis</keyword>
<keyword id="KW-0444">Lipid biosynthesis</keyword>
<keyword id="KW-0443">Lipid metabolism</keyword>
<keyword id="KW-0677">Repeat</keyword>
<keyword id="KW-0808">Transferase</keyword>
<name>LPXD_PSEA8</name>
<proteinExistence type="inferred from homology"/>
<sequence>MMSTLSYTLGQLAAHVGAEVRGDADLPIQGLATLQEAGPAQLSFLANPQYRKYLPESRAGAVLLTAADADGFAGTALVVANPYLAYASLSHLFDRKPKAAAGIHPTAIVAADAEVDPSASVGAYAVIESGARIGAGVSIGAHCVIGARSVIGEGGWLAPRVTLYHDVTIGARVSIQSGAVIGGEGFGFANEKGVWQKIAQIGGVTIGDDVEIGANTTIDRGALSDTLIGNGVKLDNQIMIAHNVQIGDHTAMAACVGISGSAKIGRHCMLAGGVGLVGHIEICDNVFVTGMTMVTRSITEPGSYSSGTAMQPAAEWKKSAARIRQLDDMARRLQQLEKRLAAVTSSGDASSDA</sequence>
<dbReference type="EC" id="2.3.1.191" evidence="1"/>
<dbReference type="EMBL" id="FM209186">
    <property type="protein sequence ID" value="CAW26117.1"/>
    <property type="molecule type" value="Genomic_DNA"/>
</dbReference>
<dbReference type="RefSeq" id="WP_003098585.1">
    <property type="nucleotide sequence ID" value="NC_011770.1"/>
</dbReference>
<dbReference type="SMR" id="B7V7U2"/>
<dbReference type="KEGG" id="pag:PLES_13891"/>
<dbReference type="HOGENOM" id="CLU_049865_0_1_6"/>
<dbReference type="UniPathway" id="UPA00973"/>
<dbReference type="GO" id="GO:0016020">
    <property type="term" value="C:membrane"/>
    <property type="evidence" value="ECO:0007669"/>
    <property type="project" value="GOC"/>
</dbReference>
<dbReference type="GO" id="GO:0016410">
    <property type="term" value="F:N-acyltransferase activity"/>
    <property type="evidence" value="ECO:0007669"/>
    <property type="project" value="InterPro"/>
</dbReference>
<dbReference type="GO" id="GO:0009245">
    <property type="term" value="P:lipid A biosynthetic process"/>
    <property type="evidence" value="ECO:0007669"/>
    <property type="project" value="UniProtKB-UniRule"/>
</dbReference>
<dbReference type="CDD" id="cd03352">
    <property type="entry name" value="LbH_LpxD"/>
    <property type="match status" value="1"/>
</dbReference>
<dbReference type="Gene3D" id="1.20.5.170">
    <property type="match status" value="1"/>
</dbReference>
<dbReference type="Gene3D" id="2.160.10.10">
    <property type="entry name" value="Hexapeptide repeat proteins"/>
    <property type="match status" value="1"/>
</dbReference>
<dbReference type="Gene3D" id="3.40.1390.10">
    <property type="entry name" value="MurE/MurF, N-terminal domain"/>
    <property type="match status" value="1"/>
</dbReference>
<dbReference type="HAMAP" id="MF_00523">
    <property type="entry name" value="LpxD"/>
    <property type="match status" value="1"/>
</dbReference>
<dbReference type="InterPro" id="IPR001451">
    <property type="entry name" value="Hexapep"/>
</dbReference>
<dbReference type="InterPro" id="IPR018357">
    <property type="entry name" value="Hexapep_transf_CS"/>
</dbReference>
<dbReference type="InterPro" id="IPR007691">
    <property type="entry name" value="LpxD"/>
</dbReference>
<dbReference type="InterPro" id="IPR011004">
    <property type="entry name" value="Trimer_LpxA-like_sf"/>
</dbReference>
<dbReference type="InterPro" id="IPR020573">
    <property type="entry name" value="UDP_GlcNAc_AcTrfase_non-rep"/>
</dbReference>
<dbReference type="NCBIfam" id="TIGR01853">
    <property type="entry name" value="lipid_A_lpxD"/>
    <property type="match status" value="1"/>
</dbReference>
<dbReference type="NCBIfam" id="NF002060">
    <property type="entry name" value="PRK00892.1"/>
    <property type="match status" value="1"/>
</dbReference>
<dbReference type="PANTHER" id="PTHR43378">
    <property type="entry name" value="UDP-3-O-ACYLGLUCOSAMINE N-ACYLTRANSFERASE"/>
    <property type="match status" value="1"/>
</dbReference>
<dbReference type="PANTHER" id="PTHR43378:SF2">
    <property type="entry name" value="UDP-3-O-ACYLGLUCOSAMINE N-ACYLTRANSFERASE 1, MITOCHONDRIAL-RELATED"/>
    <property type="match status" value="1"/>
</dbReference>
<dbReference type="Pfam" id="PF00132">
    <property type="entry name" value="Hexapep"/>
    <property type="match status" value="2"/>
</dbReference>
<dbReference type="Pfam" id="PF04613">
    <property type="entry name" value="LpxD"/>
    <property type="match status" value="1"/>
</dbReference>
<dbReference type="SUPFAM" id="SSF51161">
    <property type="entry name" value="Trimeric LpxA-like enzymes"/>
    <property type="match status" value="1"/>
</dbReference>
<dbReference type="PROSITE" id="PS00101">
    <property type="entry name" value="HEXAPEP_TRANSFERASES"/>
    <property type="match status" value="1"/>
</dbReference>
<reference key="1">
    <citation type="journal article" date="2009" name="Genome Res.">
        <title>Newly introduced genomic prophage islands are critical determinants of in vivo competitiveness in the Liverpool epidemic strain of Pseudomonas aeruginosa.</title>
        <authorList>
            <person name="Winstanley C."/>
            <person name="Langille M.G.I."/>
            <person name="Fothergill J.L."/>
            <person name="Kukavica-Ibrulj I."/>
            <person name="Paradis-Bleau C."/>
            <person name="Sanschagrin F."/>
            <person name="Thomson N.R."/>
            <person name="Winsor G.L."/>
            <person name="Quail M.A."/>
            <person name="Lennard N."/>
            <person name="Bignell A."/>
            <person name="Clarke L."/>
            <person name="Seeger K."/>
            <person name="Saunders D."/>
            <person name="Harris D."/>
            <person name="Parkhill J."/>
            <person name="Hancock R.E.W."/>
            <person name="Brinkman F.S.L."/>
            <person name="Levesque R.C."/>
        </authorList>
    </citation>
    <scope>NUCLEOTIDE SEQUENCE [LARGE SCALE GENOMIC DNA]</scope>
    <source>
        <strain>LESB58</strain>
    </source>
</reference>
<gene>
    <name evidence="1" type="primary">lpxD</name>
    <name type="ordered locus">PLES_13891</name>
</gene>
<evidence type="ECO:0000255" key="1">
    <source>
        <dbReference type="HAMAP-Rule" id="MF_00523"/>
    </source>
</evidence>
<accession>B7V7U2</accession>
<organism>
    <name type="scientific">Pseudomonas aeruginosa (strain LESB58)</name>
    <dbReference type="NCBI Taxonomy" id="557722"/>
    <lineage>
        <taxon>Bacteria</taxon>
        <taxon>Pseudomonadati</taxon>
        <taxon>Pseudomonadota</taxon>
        <taxon>Gammaproteobacteria</taxon>
        <taxon>Pseudomonadales</taxon>
        <taxon>Pseudomonadaceae</taxon>
        <taxon>Pseudomonas</taxon>
    </lineage>
</organism>
<feature type="chain" id="PRO_1000127692" description="UDP-3-O-acylglucosamine N-acyltransferase">
    <location>
        <begin position="1"/>
        <end position="353"/>
    </location>
</feature>
<feature type="active site" description="Proton acceptor" evidence="1">
    <location>
        <position position="242"/>
    </location>
</feature>